<name>NUDT9_RAT</name>
<sequence>MAGRSLGKAVATVSLSVALASVTVRSSGCRAIPAPRNPFPSCGFHLKANIMSGSNGVKDNSHNKARTSPYPGSKVERSKVPNEKVGWLVEWQDYNPVEYTAVSVLAGPQWADPQISESSFSPRFNEKDGHVERKSQNGLYEIENGRPRNPAGRTGLVGRGLLGRWGPNHAADPIITRWKRDESGNKITHPVSGKCILQFVAIKRKDCGEWAIPGGMVDPGEKISATLKREFGEEALNSLQKSSAEKREIEEKLHALFSQEHLVIYKGYVDDPRNTDNAWMETEAVNYHDETGETMDNLTLEAGDDAGKVKWVDISDQLKLYASHSQFIKLVAEKRDAHWSEDCAADSHGL</sequence>
<evidence type="ECO:0000250" key="1"/>
<evidence type="ECO:0000250" key="2">
    <source>
        <dbReference type="UniProtKB" id="Q9BW91"/>
    </source>
</evidence>
<evidence type="ECO:0000255" key="3"/>
<evidence type="ECO:0000255" key="4">
    <source>
        <dbReference type="PROSITE-ProRule" id="PRU00794"/>
    </source>
</evidence>
<evidence type="ECO:0000256" key="5">
    <source>
        <dbReference type="SAM" id="MobiDB-lite"/>
    </source>
</evidence>
<evidence type="ECO:0000305" key="6"/>
<accession>Q5XIG0</accession>
<organism>
    <name type="scientific">Rattus norvegicus</name>
    <name type="common">Rat</name>
    <dbReference type="NCBI Taxonomy" id="10116"/>
    <lineage>
        <taxon>Eukaryota</taxon>
        <taxon>Metazoa</taxon>
        <taxon>Chordata</taxon>
        <taxon>Craniata</taxon>
        <taxon>Vertebrata</taxon>
        <taxon>Euteleostomi</taxon>
        <taxon>Mammalia</taxon>
        <taxon>Eutheria</taxon>
        <taxon>Euarchontoglires</taxon>
        <taxon>Glires</taxon>
        <taxon>Rodentia</taxon>
        <taxon>Myomorpha</taxon>
        <taxon>Muroidea</taxon>
        <taxon>Muridae</taxon>
        <taxon>Murinae</taxon>
        <taxon>Rattus</taxon>
    </lineage>
</organism>
<proteinExistence type="evidence at transcript level"/>
<dbReference type="EC" id="3.6.1.13"/>
<dbReference type="EMBL" id="BC083722">
    <property type="protein sequence ID" value="AAH83722.1"/>
    <property type="molecule type" value="mRNA"/>
</dbReference>
<dbReference type="RefSeq" id="NP_001006992.1">
    <property type="nucleotide sequence ID" value="NM_001006991.1"/>
</dbReference>
<dbReference type="SMR" id="Q5XIG0"/>
<dbReference type="FunCoup" id="Q5XIG0">
    <property type="interactions" value="3199"/>
</dbReference>
<dbReference type="STRING" id="10116.ENSRNOP00000002973"/>
<dbReference type="iPTMnet" id="Q5XIG0"/>
<dbReference type="PhosphoSitePlus" id="Q5XIG0"/>
<dbReference type="jPOST" id="Q5XIG0"/>
<dbReference type="PaxDb" id="10116-ENSRNOP00000002973"/>
<dbReference type="Ensembl" id="ENSRNOT00000002973.5">
    <property type="protein sequence ID" value="ENSRNOP00000002973.3"/>
    <property type="gene ID" value="ENSRNOG00000002186.5"/>
</dbReference>
<dbReference type="GeneID" id="305149"/>
<dbReference type="KEGG" id="rno:305149"/>
<dbReference type="AGR" id="RGD:1359522"/>
<dbReference type="CTD" id="53343"/>
<dbReference type="RGD" id="1359522">
    <property type="gene designation" value="Nudt9"/>
</dbReference>
<dbReference type="eggNOG" id="KOG4195">
    <property type="taxonomic scope" value="Eukaryota"/>
</dbReference>
<dbReference type="GeneTree" id="ENSGT00390000017405"/>
<dbReference type="HOGENOM" id="CLU_067226_0_0_1"/>
<dbReference type="InParanoid" id="Q5XIG0"/>
<dbReference type="OMA" id="VQVYQGY"/>
<dbReference type="OrthoDB" id="47351at9989"/>
<dbReference type="PhylomeDB" id="Q5XIG0"/>
<dbReference type="TreeFam" id="TF106351"/>
<dbReference type="Reactome" id="R-RNO-2393930">
    <property type="pathway name" value="Phosphate bond hydrolysis by NUDT proteins"/>
</dbReference>
<dbReference type="SABIO-RK" id="Q5XIG0"/>
<dbReference type="PRO" id="PR:Q5XIG0"/>
<dbReference type="Proteomes" id="UP000002494">
    <property type="component" value="Chromosome 14"/>
</dbReference>
<dbReference type="Bgee" id="ENSRNOG00000002186">
    <property type="expression patterns" value="Expressed in testis and 20 other cell types or tissues"/>
</dbReference>
<dbReference type="GO" id="GO:0030054">
    <property type="term" value="C:cell junction"/>
    <property type="evidence" value="ECO:0007669"/>
    <property type="project" value="Ensembl"/>
</dbReference>
<dbReference type="GO" id="GO:0005829">
    <property type="term" value="C:cytosol"/>
    <property type="evidence" value="ECO:0000266"/>
    <property type="project" value="RGD"/>
</dbReference>
<dbReference type="GO" id="GO:0005739">
    <property type="term" value="C:mitochondrion"/>
    <property type="evidence" value="ECO:0000266"/>
    <property type="project" value="RGD"/>
</dbReference>
<dbReference type="GO" id="GO:0016604">
    <property type="term" value="C:nuclear body"/>
    <property type="evidence" value="ECO:0007669"/>
    <property type="project" value="Ensembl"/>
</dbReference>
<dbReference type="GO" id="GO:0031965">
    <property type="term" value="C:nuclear membrane"/>
    <property type="evidence" value="ECO:0007669"/>
    <property type="project" value="Ensembl"/>
</dbReference>
<dbReference type="GO" id="GO:0047631">
    <property type="term" value="F:ADP-ribose diphosphatase activity"/>
    <property type="evidence" value="ECO:0000266"/>
    <property type="project" value="RGD"/>
</dbReference>
<dbReference type="GO" id="GO:0046032">
    <property type="term" value="P:ADP catabolic process"/>
    <property type="evidence" value="ECO:0000266"/>
    <property type="project" value="RGD"/>
</dbReference>
<dbReference type="CDD" id="cd03670">
    <property type="entry name" value="NUDIX_ADPRase_Nudt9"/>
    <property type="match status" value="1"/>
</dbReference>
<dbReference type="FunFam" id="3.90.79.10:FF:000021">
    <property type="entry name" value="ADP-ribose pyrophosphatase, mitochondrial isoform X1"/>
    <property type="match status" value="1"/>
</dbReference>
<dbReference type="Gene3D" id="3.90.79.10">
    <property type="entry name" value="Nucleoside Triphosphate Pyrophosphohydrolase"/>
    <property type="match status" value="1"/>
</dbReference>
<dbReference type="InterPro" id="IPR015797">
    <property type="entry name" value="NUDIX_hydrolase-like_dom_sf"/>
</dbReference>
<dbReference type="InterPro" id="IPR000086">
    <property type="entry name" value="NUDIX_hydrolase_dom"/>
</dbReference>
<dbReference type="InterPro" id="IPR039989">
    <property type="entry name" value="NUDT9"/>
</dbReference>
<dbReference type="PANTHER" id="PTHR13030:SF8">
    <property type="entry name" value="ADP-RIBOSE PYROPHOSPHATASE, MITOCHONDRIAL"/>
    <property type="match status" value="1"/>
</dbReference>
<dbReference type="PANTHER" id="PTHR13030">
    <property type="entry name" value="NUDIX HYDROLASE"/>
    <property type="match status" value="1"/>
</dbReference>
<dbReference type="Pfam" id="PF00293">
    <property type="entry name" value="NUDIX"/>
    <property type="match status" value="1"/>
</dbReference>
<dbReference type="SUPFAM" id="SSF55811">
    <property type="entry name" value="Nudix"/>
    <property type="match status" value="1"/>
</dbReference>
<dbReference type="PROSITE" id="PS51462">
    <property type="entry name" value="NUDIX"/>
    <property type="match status" value="1"/>
</dbReference>
<reference key="1">
    <citation type="journal article" date="2004" name="Genome Res.">
        <title>The status, quality, and expansion of the NIH full-length cDNA project: the Mammalian Gene Collection (MGC).</title>
        <authorList>
            <consortium name="The MGC Project Team"/>
        </authorList>
    </citation>
    <scope>NUCLEOTIDE SEQUENCE [LARGE SCALE MRNA]</scope>
    <source>
        <tissue>Heart</tissue>
    </source>
</reference>
<gene>
    <name type="primary">Nudt9</name>
</gene>
<protein>
    <recommendedName>
        <fullName>ADP-ribose pyrophosphatase, mitochondrial</fullName>
        <ecNumber>3.6.1.13</ecNumber>
    </recommendedName>
    <alternativeName>
        <fullName>ADP-ribose diphosphatase</fullName>
    </alternativeName>
    <alternativeName>
        <fullName>ADP-ribose phosphohydrolase</fullName>
    </alternativeName>
    <alternativeName>
        <fullName>Adenosine diphosphoribose pyrophosphatase</fullName>
        <shortName>ADPR-PPase</shortName>
    </alternativeName>
    <alternativeName>
        <fullName>Nucleoside diphosphate-linked moiety X motif 9</fullName>
        <shortName>Nudix motif 9</shortName>
    </alternativeName>
</protein>
<comment type="function">
    <text>Hydrolyzes ADP-ribose (ADPR) to AMP and ribose 5'-phosphate.</text>
</comment>
<comment type="catalytic activity">
    <reaction>
        <text>ADP-D-ribose + H2O = D-ribose 5-phosphate + AMP + 2 H(+)</text>
        <dbReference type="Rhea" id="RHEA:10412"/>
        <dbReference type="ChEBI" id="CHEBI:15377"/>
        <dbReference type="ChEBI" id="CHEBI:15378"/>
        <dbReference type="ChEBI" id="CHEBI:57967"/>
        <dbReference type="ChEBI" id="CHEBI:78346"/>
        <dbReference type="ChEBI" id="CHEBI:456215"/>
        <dbReference type="EC" id="3.6.1.13"/>
    </reaction>
</comment>
<comment type="cofactor">
    <cofactor evidence="1">
        <name>Mg(2+)</name>
        <dbReference type="ChEBI" id="CHEBI:18420"/>
    </cofactor>
</comment>
<comment type="cofactor">
    <cofactor evidence="1">
        <name>Mn(2+)</name>
        <dbReference type="ChEBI" id="CHEBI:29035"/>
    </cofactor>
</comment>
<comment type="subunit">
    <text evidence="1">Monomer. Interacts with GLOD4.</text>
</comment>
<comment type="subcellular location">
    <subcellularLocation>
        <location evidence="1">Mitochondrion</location>
    </subcellularLocation>
</comment>
<comment type="similarity">
    <text evidence="6">Belongs to the Nudix hydrolase family. NudF subfamily.</text>
</comment>
<feature type="transit peptide" description="Mitochondrion" evidence="3">
    <location>
        <begin position="1"/>
        <end position="46"/>
    </location>
</feature>
<feature type="chain" id="PRO_0000019952" description="ADP-ribose pyrophosphatase, mitochondrial">
    <location>
        <begin position="47"/>
        <end position="350"/>
    </location>
</feature>
<feature type="domain" description="Nudix hydrolase" evidence="4">
    <location>
        <begin position="178"/>
        <end position="334"/>
    </location>
</feature>
<feature type="region of interest" description="Disordered" evidence="5">
    <location>
        <begin position="53"/>
        <end position="77"/>
    </location>
</feature>
<feature type="region of interest" description="Disordered" evidence="5">
    <location>
        <begin position="116"/>
        <end position="153"/>
    </location>
</feature>
<feature type="short sequence motif" description="Nudix box">
    <location>
        <begin position="215"/>
        <end position="237"/>
    </location>
</feature>
<feature type="compositionally biased region" description="Basic and acidic residues" evidence="5">
    <location>
        <begin position="124"/>
        <end position="135"/>
    </location>
</feature>
<feature type="modified residue" description="Phosphoserine" evidence="2">
    <location>
        <position position="121"/>
    </location>
</feature>
<keyword id="KW-0378">Hydrolase</keyword>
<keyword id="KW-0460">Magnesium</keyword>
<keyword id="KW-0464">Manganese</keyword>
<keyword id="KW-0496">Mitochondrion</keyword>
<keyword id="KW-0597">Phosphoprotein</keyword>
<keyword id="KW-1185">Reference proteome</keyword>
<keyword id="KW-0809">Transit peptide</keyword>